<gene>
    <name type="primary">yknZ</name>
    <name evidence="6" type="ordered locus">BSU14370</name>
</gene>
<reference key="1">
    <citation type="submission" date="1997-07" db="EMBL/GenBank/DDBJ databases">
        <title>Sequence analysis of the mobA-ampS region of the Bacillus subtilis chromosome.</title>
        <authorList>
            <person name="Caldwell R.M."/>
            <person name="Ferrari E."/>
        </authorList>
    </citation>
    <scope>NUCLEOTIDE SEQUENCE [GENOMIC DNA]</scope>
    <source>
        <strain>168</strain>
    </source>
</reference>
<reference key="2">
    <citation type="journal article" date="1997" name="Nature">
        <title>The complete genome sequence of the Gram-positive bacterium Bacillus subtilis.</title>
        <authorList>
            <person name="Kunst F."/>
            <person name="Ogasawara N."/>
            <person name="Moszer I."/>
            <person name="Albertini A.M."/>
            <person name="Alloni G."/>
            <person name="Azevedo V."/>
            <person name="Bertero M.G."/>
            <person name="Bessieres P."/>
            <person name="Bolotin A."/>
            <person name="Borchert S."/>
            <person name="Borriss R."/>
            <person name="Boursier L."/>
            <person name="Brans A."/>
            <person name="Braun M."/>
            <person name="Brignell S.C."/>
            <person name="Bron S."/>
            <person name="Brouillet S."/>
            <person name="Bruschi C.V."/>
            <person name="Caldwell B."/>
            <person name="Capuano V."/>
            <person name="Carter N.M."/>
            <person name="Choi S.-K."/>
            <person name="Codani J.-J."/>
            <person name="Connerton I.F."/>
            <person name="Cummings N.J."/>
            <person name="Daniel R.A."/>
            <person name="Denizot F."/>
            <person name="Devine K.M."/>
            <person name="Duesterhoeft A."/>
            <person name="Ehrlich S.D."/>
            <person name="Emmerson P.T."/>
            <person name="Entian K.-D."/>
            <person name="Errington J."/>
            <person name="Fabret C."/>
            <person name="Ferrari E."/>
            <person name="Foulger D."/>
            <person name="Fritz C."/>
            <person name="Fujita M."/>
            <person name="Fujita Y."/>
            <person name="Fuma S."/>
            <person name="Galizzi A."/>
            <person name="Galleron N."/>
            <person name="Ghim S.-Y."/>
            <person name="Glaser P."/>
            <person name="Goffeau A."/>
            <person name="Golightly E.J."/>
            <person name="Grandi G."/>
            <person name="Guiseppi G."/>
            <person name="Guy B.J."/>
            <person name="Haga K."/>
            <person name="Haiech J."/>
            <person name="Harwood C.R."/>
            <person name="Henaut A."/>
            <person name="Hilbert H."/>
            <person name="Holsappel S."/>
            <person name="Hosono S."/>
            <person name="Hullo M.-F."/>
            <person name="Itaya M."/>
            <person name="Jones L.-M."/>
            <person name="Joris B."/>
            <person name="Karamata D."/>
            <person name="Kasahara Y."/>
            <person name="Klaerr-Blanchard M."/>
            <person name="Klein C."/>
            <person name="Kobayashi Y."/>
            <person name="Koetter P."/>
            <person name="Koningstein G."/>
            <person name="Krogh S."/>
            <person name="Kumano M."/>
            <person name="Kurita K."/>
            <person name="Lapidus A."/>
            <person name="Lardinois S."/>
            <person name="Lauber J."/>
            <person name="Lazarevic V."/>
            <person name="Lee S.-M."/>
            <person name="Levine A."/>
            <person name="Liu H."/>
            <person name="Masuda S."/>
            <person name="Mauel C."/>
            <person name="Medigue C."/>
            <person name="Medina N."/>
            <person name="Mellado R.P."/>
            <person name="Mizuno M."/>
            <person name="Moestl D."/>
            <person name="Nakai S."/>
            <person name="Noback M."/>
            <person name="Noone D."/>
            <person name="O'Reilly M."/>
            <person name="Ogawa K."/>
            <person name="Ogiwara A."/>
            <person name="Oudega B."/>
            <person name="Park S.-H."/>
            <person name="Parro V."/>
            <person name="Pohl T.M."/>
            <person name="Portetelle D."/>
            <person name="Porwollik S."/>
            <person name="Prescott A.M."/>
            <person name="Presecan E."/>
            <person name="Pujic P."/>
            <person name="Purnelle B."/>
            <person name="Rapoport G."/>
            <person name="Rey M."/>
            <person name="Reynolds S."/>
            <person name="Rieger M."/>
            <person name="Rivolta C."/>
            <person name="Rocha E."/>
            <person name="Roche B."/>
            <person name="Rose M."/>
            <person name="Sadaie Y."/>
            <person name="Sato T."/>
            <person name="Scanlan E."/>
            <person name="Schleich S."/>
            <person name="Schroeter R."/>
            <person name="Scoffone F."/>
            <person name="Sekiguchi J."/>
            <person name="Sekowska A."/>
            <person name="Seror S.J."/>
            <person name="Serror P."/>
            <person name="Shin B.-S."/>
            <person name="Soldo B."/>
            <person name="Sorokin A."/>
            <person name="Tacconi E."/>
            <person name="Takagi T."/>
            <person name="Takahashi H."/>
            <person name="Takemaru K."/>
            <person name="Takeuchi M."/>
            <person name="Tamakoshi A."/>
            <person name="Tanaka T."/>
            <person name="Terpstra P."/>
            <person name="Tognoni A."/>
            <person name="Tosato V."/>
            <person name="Uchiyama S."/>
            <person name="Vandenbol M."/>
            <person name="Vannier F."/>
            <person name="Vassarotti A."/>
            <person name="Viari A."/>
            <person name="Wambutt R."/>
            <person name="Wedler E."/>
            <person name="Wedler H."/>
            <person name="Weitzenegger T."/>
            <person name="Winters P."/>
            <person name="Wipat A."/>
            <person name="Yamamoto H."/>
            <person name="Yamane K."/>
            <person name="Yasumoto K."/>
            <person name="Yata K."/>
            <person name="Yoshida K."/>
            <person name="Yoshikawa H.-F."/>
            <person name="Zumstein E."/>
            <person name="Yoshikawa H."/>
            <person name="Danchin A."/>
        </authorList>
    </citation>
    <scope>NUCLEOTIDE SEQUENCE [LARGE SCALE GENOMIC DNA]</scope>
    <source>
        <strain>168</strain>
    </source>
</reference>
<reference key="3">
    <citation type="journal article" date="2010" name="Genes Dev.">
        <title>Functional microdomains in bacterial membranes.</title>
        <authorList>
            <person name="Lopez D."/>
            <person name="Kolter R."/>
        </authorList>
    </citation>
    <scope>IDENTIFICATION BY MASS SPECTROMETRY</scope>
    <scope>SUBCELLULAR LOCATION</scope>
    <source>
        <strain>168 / Marburg / ATCC 6051 / DSM 10 / JCM 1465 / NBRC 13719 / NCIMB 3610 / NRRL NRS-744 / VKM B-501</strain>
    </source>
</reference>
<reference key="4">
    <citation type="journal article" date="2012" name="J. Bacteriol.">
        <title>YknWXYZ is an unusual four-component transporter with a role in protection against sporulation-delaying-protein-induced killing of Bacillus subtilis.</title>
        <authorList>
            <person name="Yamada Y."/>
            <person name="Tikhonova E.B."/>
            <person name="Zgurskaya H.I."/>
        </authorList>
    </citation>
    <scope>FUNCTION</scope>
    <scope>SUBUNIT</scope>
    <scope>SUBCELLULAR LOCATION</scope>
    <scope>INDUCTION</scope>
    <source>
        <strain>168</strain>
    </source>
</reference>
<reference key="5">
    <citation type="journal article" date="2012" name="Mol. Microbiol.">
        <title>The biofilm formation defect of a Bacillus subtilis flotillin-defective mutant involves the protease FtsH.</title>
        <authorList>
            <person name="Yepes A."/>
            <person name="Schneider J."/>
            <person name="Mielich B."/>
            <person name="Koch G."/>
            <person name="Garcia-Betancur J.C."/>
            <person name="Ramamurthi K.S."/>
            <person name="Vlamakis H."/>
            <person name="Lopez D."/>
        </authorList>
    </citation>
    <scope>SUBCELLULAR LOCATION</scope>
    <source>
        <strain>168 / Marburg / ATCC 6051 / DSM 10 / JCM 1465 / NBRC 13719 / NCIMB 3610 / NRRL NRS-744 / VKM B-501</strain>
    </source>
</reference>
<organism>
    <name type="scientific">Bacillus subtilis (strain 168)</name>
    <dbReference type="NCBI Taxonomy" id="224308"/>
    <lineage>
        <taxon>Bacteria</taxon>
        <taxon>Bacillati</taxon>
        <taxon>Bacillota</taxon>
        <taxon>Bacilli</taxon>
        <taxon>Bacillales</taxon>
        <taxon>Bacillaceae</taxon>
        <taxon>Bacillus</taxon>
    </lineage>
</organism>
<comment type="function">
    <text evidence="3">Part of an unusual four-component transporter, which is required for protection against the killing factor SdpC (sporulation-delaying protein).</text>
</comment>
<comment type="subunit">
    <text evidence="3">Part of a complex composed of YknX, YknY and YknZ. The complex interacts with YknW.</text>
</comment>
<comment type="interaction">
    <interactant intactId="EBI-6418851">
        <id>O31712</id>
    </interactant>
    <interactant intactId="EBI-6418851">
        <id>O31712</id>
        <label>yknZ</label>
    </interactant>
    <organismsDiffer>false</organismsDiffer>
    <experiments>2</experiments>
</comment>
<comment type="subcellular location">
    <subcellularLocation>
        <location evidence="2 3 4">Cell membrane</location>
        <topology evidence="1">Multi-pass membrane protein</topology>
    </subcellularLocation>
    <subcellularLocation>
        <location evidence="2 4">Membrane raft</location>
        <topology evidence="1">Multi-pass membrane protein</topology>
    </subcellularLocation>
    <text evidence="2 4">Present in detergent-resistant membrane (DRM) fractions that may be equivalent to eukaryotic membrane rafts; these rafts include proteins involved in signaling, molecule trafficking and protein secretion.</text>
</comment>
<comment type="induction">
    <text evidence="3">Expressed in exponential-phase cells.</text>
</comment>
<comment type="similarity">
    <text evidence="5">Belongs to the ABC-4 integral membrane protein family.</text>
</comment>
<proteinExistence type="evidence at protein level"/>
<protein>
    <recommendedName>
        <fullName evidence="5">Uncharacterized ABC transporter permease YknZ</fullName>
    </recommendedName>
</protein>
<dbReference type="EMBL" id="AF012285">
    <property type="protein sequence ID" value="AAC24912.1"/>
    <property type="molecule type" value="Genomic_DNA"/>
</dbReference>
<dbReference type="EMBL" id="AL009126">
    <property type="protein sequence ID" value="CAB13310.1"/>
    <property type="molecule type" value="Genomic_DNA"/>
</dbReference>
<dbReference type="PIR" id="E69858">
    <property type="entry name" value="E69858"/>
</dbReference>
<dbReference type="SMR" id="O31712"/>
<dbReference type="FunCoup" id="O31712">
    <property type="interactions" value="367"/>
</dbReference>
<dbReference type="IntAct" id="O31712">
    <property type="interactions" value="1"/>
</dbReference>
<dbReference type="STRING" id="224308.BSU14370"/>
<dbReference type="TCDB" id="3.A.1.122.2">
    <property type="family name" value="the atp-binding cassette (abc) superfamily"/>
</dbReference>
<dbReference type="PaxDb" id="224308-BSU14370"/>
<dbReference type="EnsemblBacteria" id="CAB13310">
    <property type="protein sequence ID" value="CAB13310"/>
    <property type="gene ID" value="BSU_14370"/>
</dbReference>
<dbReference type="GeneID" id="938803"/>
<dbReference type="KEGG" id="bsu:BSU14370"/>
<dbReference type="PATRIC" id="fig|224308.179.peg.1567"/>
<dbReference type="eggNOG" id="COG0577">
    <property type="taxonomic scope" value="Bacteria"/>
</dbReference>
<dbReference type="InParanoid" id="O31712"/>
<dbReference type="OrthoDB" id="9770036at2"/>
<dbReference type="PhylomeDB" id="O31712"/>
<dbReference type="BioCyc" id="BSUB:BSU14370-MONOMER"/>
<dbReference type="Proteomes" id="UP000001570">
    <property type="component" value="Chromosome"/>
</dbReference>
<dbReference type="GO" id="GO:0045121">
    <property type="term" value="C:membrane raft"/>
    <property type="evidence" value="ECO:0007669"/>
    <property type="project" value="UniProtKB-SubCell"/>
</dbReference>
<dbReference type="GO" id="GO:0005886">
    <property type="term" value="C:plasma membrane"/>
    <property type="evidence" value="ECO:0000318"/>
    <property type="project" value="GO_Central"/>
</dbReference>
<dbReference type="GO" id="GO:0042802">
    <property type="term" value="F:identical protein binding"/>
    <property type="evidence" value="ECO:0000353"/>
    <property type="project" value="IntAct"/>
</dbReference>
<dbReference type="GO" id="GO:2001070">
    <property type="term" value="F:starch binding"/>
    <property type="evidence" value="ECO:0007669"/>
    <property type="project" value="InterPro"/>
</dbReference>
<dbReference type="GO" id="GO:0022857">
    <property type="term" value="F:transmembrane transporter activity"/>
    <property type="evidence" value="ECO:0000318"/>
    <property type="project" value="GO_Central"/>
</dbReference>
<dbReference type="InterPro" id="IPR003838">
    <property type="entry name" value="ABC3_permease_C"/>
</dbReference>
<dbReference type="InterPro" id="IPR005085">
    <property type="entry name" value="CBM25"/>
</dbReference>
<dbReference type="InterPro" id="IPR025857">
    <property type="entry name" value="MacB_PCD"/>
</dbReference>
<dbReference type="InterPro" id="IPR050250">
    <property type="entry name" value="Macrolide_Exporter_MacB"/>
</dbReference>
<dbReference type="PANTHER" id="PTHR30572:SF4">
    <property type="entry name" value="ABC TRANSPORTER PERMEASE YTRF"/>
    <property type="match status" value="1"/>
</dbReference>
<dbReference type="PANTHER" id="PTHR30572">
    <property type="entry name" value="MEMBRANE COMPONENT OF TRANSPORTER-RELATED"/>
    <property type="match status" value="1"/>
</dbReference>
<dbReference type="Pfam" id="PF02687">
    <property type="entry name" value="FtsX"/>
    <property type="match status" value="1"/>
</dbReference>
<dbReference type="Pfam" id="PF12704">
    <property type="entry name" value="MacB_PCD"/>
    <property type="match status" value="1"/>
</dbReference>
<dbReference type="SMART" id="SM01066">
    <property type="entry name" value="CBM_25"/>
    <property type="match status" value="1"/>
</dbReference>
<evidence type="ECO:0000255" key="1"/>
<evidence type="ECO:0000269" key="2">
    <source>
    </source>
</evidence>
<evidence type="ECO:0000269" key="3">
    <source>
    </source>
</evidence>
<evidence type="ECO:0000269" key="4">
    <source>
    </source>
</evidence>
<evidence type="ECO:0000305" key="5"/>
<evidence type="ECO:0000312" key="6">
    <source>
        <dbReference type="EMBL" id="CAB13310.1"/>
    </source>
</evidence>
<feature type="chain" id="PRO_0000049606" description="Uncharacterized ABC transporter permease YknZ">
    <location>
        <begin position="1"/>
        <end position="397"/>
    </location>
</feature>
<feature type="transmembrane region" description="Helical" evidence="1">
    <location>
        <begin position="22"/>
        <end position="42"/>
    </location>
</feature>
<feature type="transmembrane region" description="Helical" evidence="1">
    <location>
        <begin position="270"/>
        <end position="290"/>
    </location>
</feature>
<feature type="transmembrane region" description="Helical" evidence="1">
    <location>
        <begin position="327"/>
        <end position="347"/>
    </location>
</feature>
<feature type="transmembrane region" description="Helical" evidence="1">
    <location>
        <begin position="362"/>
        <end position="382"/>
    </location>
</feature>
<sequence length="397" mass="42125">MSLLENIRMALSSVLAHKMRSILTMLGIIIGVGSVIVVVAVGQGGEQMLKQSISGPGNTVELYYMPSDEELASNPNAAAESTFTENDIKGLKGIEGIKQVVASTSESMKARYHEEETDATVNGINDGYMNVNSLKIESGRTFTDNDFLAGNRVGIISQKMAKELFDKTSPLGEVVWINGQPVEIIGVLKKVTGLLSFDLSEMYVPFNMMKSSFGTSDFSNVSLQVESADDIKSAGKEAAQLVNDNHGTEDSYQVMNMEEIAAGIGKVTAIMTTIIGSIAGISLLVGGIGVMNIMLVSVTERTREIGIRKSLGATRGQILTQFLIESVVLTLIGGLVGIGIGYGGAALVSAIAGWPSLISWQVVCGGVLFSMLIGVIFGMLPANKAAKLDPIEALRYE</sequence>
<accession>O31712</accession>
<name>YKNZ_BACSU</name>
<keyword id="KW-1003">Cell membrane</keyword>
<keyword id="KW-0472">Membrane</keyword>
<keyword id="KW-1185">Reference proteome</keyword>
<keyword id="KW-0812">Transmembrane</keyword>
<keyword id="KW-1133">Transmembrane helix</keyword>
<keyword id="KW-0813">Transport</keyword>